<accession>C1DMQ9</accession>
<protein>
    <recommendedName>
        <fullName evidence="1">UPF0250 protein Avin_08440</fullName>
    </recommendedName>
</protein>
<dbReference type="EMBL" id="CP001157">
    <property type="protein sequence ID" value="ACO77089.1"/>
    <property type="molecule type" value="Genomic_DNA"/>
</dbReference>
<dbReference type="RefSeq" id="WP_012699514.1">
    <property type="nucleotide sequence ID" value="NC_012560.1"/>
</dbReference>
<dbReference type="SMR" id="C1DMQ9"/>
<dbReference type="STRING" id="322710.Avin_08440"/>
<dbReference type="EnsemblBacteria" id="ACO77089">
    <property type="protein sequence ID" value="ACO77089"/>
    <property type="gene ID" value="Avin_08440"/>
</dbReference>
<dbReference type="GeneID" id="88184227"/>
<dbReference type="KEGG" id="avn:Avin_08440"/>
<dbReference type="eggNOG" id="COG2921">
    <property type="taxonomic scope" value="Bacteria"/>
</dbReference>
<dbReference type="HOGENOM" id="CLU_161438_1_0_6"/>
<dbReference type="OrthoDB" id="9793424at2"/>
<dbReference type="Proteomes" id="UP000002424">
    <property type="component" value="Chromosome"/>
</dbReference>
<dbReference type="GO" id="GO:0005829">
    <property type="term" value="C:cytosol"/>
    <property type="evidence" value="ECO:0007669"/>
    <property type="project" value="TreeGrafter"/>
</dbReference>
<dbReference type="Gene3D" id="3.30.70.260">
    <property type="match status" value="1"/>
</dbReference>
<dbReference type="HAMAP" id="MF_00659">
    <property type="entry name" value="UPF0250"/>
    <property type="match status" value="1"/>
</dbReference>
<dbReference type="InterPro" id="IPR007454">
    <property type="entry name" value="UPF0250_YbeD-like"/>
</dbReference>
<dbReference type="InterPro" id="IPR027471">
    <property type="entry name" value="YbeD-like_sf"/>
</dbReference>
<dbReference type="NCBIfam" id="NF001486">
    <property type="entry name" value="PRK00341.1"/>
    <property type="match status" value="1"/>
</dbReference>
<dbReference type="PANTHER" id="PTHR38036">
    <property type="entry name" value="UPF0250 PROTEIN YBED"/>
    <property type="match status" value="1"/>
</dbReference>
<dbReference type="PANTHER" id="PTHR38036:SF1">
    <property type="entry name" value="UPF0250 PROTEIN YBED"/>
    <property type="match status" value="1"/>
</dbReference>
<dbReference type="Pfam" id="PF04359">
    <property type="entry name" value="DUF493"/>
    <property type="match status" value="1"/>
</dbReference>
<dbReference type="SUPFAM" id="SSF117991">
    <property type="entry name" value="YbeD/HP0495-like"/>
    <property type="match status" value="1"/>
</dbReference>
<reference key="1">
    <citation type="journal article" date="2009" name="J. Bacteriol.">
        <title>Genome sequence of Azotobacter vinelandii, an obligate aerobe specialized to support diverse anaerobic metabolic processes.</title>
        <authorList>
            <person name="Setubal J.C."/>
            <person name="Dos Santos P."/>
            <person name="Goldman B.S."/>
            <person name="Ertesvaag H."/>
            <person name="Espin G."/>
            <person name="Rubio L.M."/>
            <person name="Valla S."/>
            <person name="Almeida N.F."/>
            <person name="Balasubramanian D."/>
            <person name="Cromes L."/>
            <person name="Curatti L."/>
            <person name="Du Z."/>
            <person name="Godsy E."/>
            <person name="Goodner B."/>
            <person name="Hellner-Burris K."/>
            <person name="Hernandez J.A."/>
            <person name="Houmiel K."/>
            <person name="Imperial J."/>
            <person name="Kennedy C."/>
            <person name="Larson T.J."/>
            <person name="Latreille P."/>
            <person name="Ligon L.S."/>
            <person name="Lu J."/>
            <person name="Maerk M."/>
            <person name="Miller N.M."/>
            <person name="Norton S."/>
            <person name="O'Carroll I.P."/>
            <person name="Paulsen I."/>
            <person name="Raulfs E.C."/>
            <person name="Roemer R."/>
            <person name="Rosser J."/>
            <person name="Segura D."/>
            <person name="Slater S."/>
            <person name="Stricklin S.L."/>
            <person name="Studholme D.J."/>
            <person name="Sun J."/>
            <person name="Viana C.J."/>
            <person name="Wallin E."/>
            <person name="Wang B."/>
            <person name="Wheeler C."/>
            <person name="Zhu H."/>
            <person name="Dean D.R."/>
            <person name="Dixon R."/>
            <person name="Wood D."/>
        </authorList>
    </citation>
    <scope>NUCLEOTIDE SEQUENCE [LARGE SCALE GENOMIC DNA]</scope>
    <source>
        <strain>DJ / ATCC BAA-1303</strain>
    </source>
</reference>
<proteinExistence type="inferred from homology"/>
<gene>
    <name type="ordered locus">Avin_08440</name>
</gene>
<organism>
    <name type="scientific">Azotobacter vinelandii (strain DJ / ATCC BAA-1303)</name>
    <dbReference type="NCBI Taxonomy" id="322710"/>
    <lineage>
        <taxon>Bacteria</taxon>
        <taxon>Pseudomonadati</taxon>
        <taxon>Pseudomonadota</taxon>
        <taxon>Gammaproteobacteria</taxon>
        <taxon>Pseudomonadales</taxon>
        <taxon>Pseudomonadaceae</taxon>
        <taxon>Azotobacter</taxon>
    </lineage>
</organism>
<sequence length="92" mass="10212">MTDTDVQAPKIEFPCERYPIKVIGDAGEGFADLVVEVIQRHAPDLDSSTLRLRDSRNGRFLSVQVLITATGVEQLQAIHLDLRATGRVHMVL</sequence>
<evidence type="ECO:0000255" key="1">
    <source>
        <dbReference type="HAMAP-Rule" id="MF_00659"/>
    </source>
</evidence>
<comment type="similarity">
    <text evidence="1">Belongs to the UPF0250 family.</text>
</comment>
<name>Y844_AZOVD</name>
<feature type="chain" id="PRO_1000212469" description="UPF0250 protein Avin_08440">
    <location>
        <begin position="1"/>
        <end position="92"/>
    </location>
</feature>